<comment type="function">
    <text evidence="1">DNA-dependent RNA polymerase catalyzes the transcription of DNA into RNA using the four ribonucleoside triphosphates as substrates.</text>
</comment>
<comment type="catalytic activity">
    <reaction evidence="1">
        <text>RNA(n) + a ribonucleoside 5'-triphosphate = RNA(n+1) + diphosphate</text>
        <dbReference type="Rhea" id="RHEA:21248"/>
        <dbReference type="Rhea" id="RHEA-COMP:14527"/>
        <dbReference type="Rhea" id="RHEA-COMP:17342"/>
        <dbReference type="ChEBI" id="CHEBI:33019"/>
        <dbReference type="ChEBI" id="CHEBI:61557"/>
        <dbReference type="ChEBI" id="CHEBI:140395"/>
        <dbReference type="EC" id="2.7.7.6"/>
    </reaction>
</comment>
<comment type="cofactor">
    <cofactor evidence="1">
        <name>Mg(2+)</name>
        <dbReference type="ChEBI" id="CHEBI:18420"/>
    </cofactor>
    <text evidence="1">Binds 1 Mg(2+) ion per subunit.</text>
</comment>
<comment type="cofactor">
    <cofactor evidence="1">
        <name>Zn(2+)</name>
        <dbReference type="ChEBI" id="CHEBI:29105"/>
    </cofactor>
    <text evidence="1">Binds 2 Zn(2+) ions per subunit.</text>
</comment>
<comment type="subunit">
    <text evidence="1">The RNAP catalytic core consists of 2 alpha, 1 beta, 1 beta' and 1 omega subunit. When a sigma factor is associated with the core the holoenzyme is formed, which can initiate transcription.</text>
</comment>
<comment type="similarity">
    <text evidence="1">Belongs to the RNA polymerase beta' chain family.</text>
</comment>
<sequence>MLDVNNFEYMKIGLASPDKIRSWSHGEVKKPETINYRTLKPERDGLFCERIFGPMKDWECSCGKYKRVRYKGVVCDRCGVEVTKSKVRRERMGHIELAAPVSHIWYFKGIPSRMGLVMDMSPRALEEIIYFASYVVTEPGDTPLEKKQLLSEREYRVYREKYGKGFSAGMGAEAIKKILADIDLEKETNDLKEELKSAQGQRRTRAIRRLEVMEAFRNSGNNPSWMVLDVLPVIPPEIRPMVQLEGGRFATSDLNDLYRRVINRNNRLKRLLDLGAPNIIVQNEKRMLQEAVDALIDNGRRGRPVTGPGNRPLKSLSHMLKGKQGRFRQNLLGKRVDYSGRSVIVVGPNLKMYQCGLPKEMALELFKPFVMKELVGRGLAHNIKSAKRKIERMAPEIWDVLEEVIREHPVLLNRAPTLHRLGIQAFEPTLVEGRAIRLHPLVCTAYNADFDGDQMAVHVPLSAEAQAEARILMLAAQNILNPKDGKPVVTPSQDMVLGNYYLTLERENAVGEGTIFKDINEAQLAYQNGYVHLHSRIAVFAGSIPNERFTDEQRNQLLITTVGKLIFNTILPKSFPYINEPTKFNLEIETPAKYFVDTTTDVRAHIAAQELIDPFKKKILGNIIAEVFKKFHITETSKMLDRMKDLGFKISTKAGMTVGIADILTLEEKHEILEKAHDTVEKITKSFRRGLITDDERYERVIGVWNAAKDEIQGKLILSLDRLNPIFMMQDSGARGNISNFTQLAGMRGLMADPSGRIVELPITSNFREGLTVLEYFISTHGARKGLTDTALKTADSGYLTRRLVDVAQDVIIREDDCGTDRGLTIKAIREGTEIIEPLEERLEGRYSRKTIRHPETKEVIARENDLITEAIATQIVDAGIEEVTIRSAFTCNTKHGVCKKCYGKNLATGTEVEVGEAVGIIAAQSIGEPGTQLTMRTFHTGGVAGDDITQGLPRIQEIFEARNPKGQAIITEVGGEVVSIEEGRDRQQEITIQGTDDRRSYNIPYTARLRVEEGTIVERGEALTEGSVDPKALIRVRDVLSVQEYLLAEVQKVYRMQGVEIGDKHVEVMVRQMLRKIRVMDTGDTNILPGTLMDIHTFTEANRDAILSGSQPATGRPVLLGITKASLETDSFLSAASFQETTRVLTDAAIKGKRDELLGLKENVILGKLVPAGTGIGRYRKLKSEVIKETAEVTDEITNI</sequence>
<organism>
    <name type="scientific">Listeria monocytogenes serotype 4b (strain F2365)</name>
    <dbReference type="NCBI Taxonomy" id="265669"/>
    <lineage>
        <taxon>Bacteria</taxon>
        <taxon>Bacillati</taxon>
        <taxon>Bacillota</taxon>
        <taxon>Bacilli</taxon>
        <taxon>Bacillales</taxon>
        <taxon>Listeriaceae</taxon>
        <taxon>Listeria</taxon>
    </lineage>
</organism>
<protein>
    <recommendedName>
        <fullName evidence="1">DNA-directed RNA polymerase subunit beta'</fullName>
        <shortName evidence="1">RNAP subunit beta'</shortName>
        <ecNumber evidence="1">2.7.7.6</ecNumber>
    </recommendedName>
    <alternativeName>
        <fullName evidence="1">RNA polymerase subunit beta'</fullName>
    </alternativeName>
    <alternativeName>
        <fullName evidence="1">Transcriptase subunit beta'</fullName>
    </alternativeName>
</protein>
<gene>
    <name evidence="1" type="primary">rpoC</name>
    <name type="ordered locus">LMOf2365_0275</name>
</gene>
<name>RPOC_LISMF</name>
<feature type="chain" id="PRO_0000067756" description="DNA-directed RNA polymerase subunit beta'">
    <location>
        <begin position="1"/>
        <end position="1201"/>
    </location>
</feature>
<feature type="binding site" evidence="1">
    <location>
        <position position="60"/>
    </location>
    <ligand>
        <name>Zn(2+)</name>
        <dbReference type="ChEBI" id="CHEBI:29105"/>
        <label>1</label>
    </ligand>
</feature>
<feature type="binding site" evidence="1">
    <location>
        <position position="62"/>
    </location>
    <ligand>
        <name>Zn(2+)</name>
        <dbReference type="ChEBI" id="CHEBI:29105"/>
        <label>1</label>
    </ligand>
</feature>
<feature type="binding site" evidence="1">
    <location>
        <position position="75"/>
    </location>
    <ligand>
        <name>Zn(2+)</name>
        <dbReference type="ChEBI" id="CHEBI:29105"/>
        <label>1</label>
    </ligand>
</feature>
<feature type="binding site" evidence="1">
    <location>
        <position position="78"/>
    </location>
    <ligand>
        <name>Zn(2+)</name>
        <dbReference type="ChEBI" id="CHEBI:29105"/>
        <label>1</label>
    </ligand>
</feature>
<feature type="binding site" evidence="1">
    <location>
        <position position="449"/>
    </location>
    <ligand>
        <name>Mg(2+)</name>
        <dbReference type="ChEBI" id="CHEBI:18420"/>
    </ligand>
</feature>
<feature type="binding site" evidence="1">
    <location>
        <position position="451"/>
    </location>
    <ligand>
        <name>Mg(2+)</name>
        <dbReference type="ChEBI" id="CHEBI:18420"/>
    </ligand>
</feature>
<feature type="binding site" evidence="1">
    <location>
        <position position="453"/>
    </location>
    <ligand>
        <name>Mg(2+)</name>
        <dbReference type="ChEBI" id="CHEBI:18420"/>
    </ligand>
</feature>
<feature type="binding site" evidence="1">
    <location>
        <position position="818"/>
    </location>
    <ligand>
        <name>Zn(2+)</name>
        <dbReference type="ChEBI" id="CHEBI:29105"/>
        <label>2</label>
    </ligand>
</feature>
<feature type="binding site" evidence="1">
    <location>
        <position position="892"/>
    </location>
    <ligand>
        <name>Zn(2+)</name>
        <dbReference type="ChEBI" id="CHEBI:29105"/>
        <label>2</label>
    </ligand>
</feature>
<feature type="binding site" evidence="1">
    <location>
        <position position="899"/>
    </location>
    <ligand>
        <name>Zn(2+)</name>
        <dbReference type="ChEBI" id="CHEBI:29105"/>
        <label>2</label>
    </ligand>
</feature>
<feature type="binding site" evidence="1">
    <location>
        <position position="902"/>
    </location>
    <ligand>
        <name>Zn(2+)</name>
        <dbReference type="ChEBI" id="CHEBI:29105"/>
        <label>2</label>
    </ligand>
</feature>
<accession>Q724E9</accession>
<dbReference type="EC" id="2.7.7.6" evidence="1"/>
<dbReference type="EMBL" id="AE017262">
    <property type="protein sequence ID" value="AAT03062.1"/>
    <property type="molecule type" value="Genomic_DNA"/>
</dbReference>
<dbReference type="RefSeq" id="WP_003728070.1">
    <property type="nucleotide sequence ID" value="NC_002973.6"/>
</dbReference>
<dbReference type="SMR" id="Q724E9"/>
<dbReference type="GeneID" id="86844226"/>
<dbReference type="KEGG" id="lmf:LMOf2365_0275"/>
<dbReference type="HOGENOM" id="CLU_000524_3_1_9"/>
<dbReference type="GO" id="GO:0000428">
    <property type="term" value="C:DNA-directed RNA polymerase complex"/>
    <property type="evidence" value="ECO:0007669"/>
    <property type="project" value="UniProtKB-KW"/>
</dbReference>
<dbReference type="GO" id="GO:0003677">
    <property type="term" value="F:DNA binding"/>
    <property type="evidence" value="ECO:0007669"/>
    <property type="project" value="UniProtKB-UniRule"/>
</dbReference>
<dbReference type="GO" id="GO:0003899">
    <property type="term" value="F:DNA-directed RNA polymerase activity"/>
    <property type="evidence" value="ECO:0007669"/>
    <property type="project" value="UniProtKB-UniRule"/>
</dbReference>
<dbReference type="GO" id="GO:0000287">
    <property type="term" value="F:magnesium ion binding"/>
    <property type="evidence" value="ECO:0007669"/>
    <property type="project" value="UniProtKB-UniRule"/>
</dbReference>
<dbReference type="GO" id="GO:0008270">
    <property type="term" value="F:zinc ion binding"/>
    <property type="evidence" value="ECO:0007669"/>
    <property type="project" value="UniProtKB-UniRule"/>
</dbReference>
<dbReference type="GO" id="GO:0006351">
    <property type="term" value="P:DNA-templated transcription"/>
    <property type="evidence" value="ECO:0007669"/>
    <property type="project" value="UniProtKB-UniRule"/>
</dbReference>
<dbReference type="CDD" id="cd02655">
    <property type="entry name" value="RNAP_beta'_C"/>
    <property type="match status" value="1"/>
</dbReference>
<dbReference type="CDD" id="cd01609">
    <property type="entry name" value="RNAP_beta'_N"/>
    <property type="match status" value="1"/>
</dbReference>
<dbReference type="FunFam" id="1.10.132.30:FF:000003">
    <property type="entry name" value="DNA-directed RNA polymerase subunit beta"/>
    <property type="match status" value="1"/>
</dbReference>
<dbReference type="FunFam" id="1.10.150.390:FF:000002">
    <property type="entry name" value="DNA-directed RNA polymerase subunit beta"/>
    <property type="match status" value="1"/>
</dbReference>
<dbReference type="FunFam" id="1.10.274.100:FF:000019">
    <property type="entry name" value="DNA-directed RNA polymerase subunit beta"/>
    <property type="match status" value="1"/>
</dbReference>
<dbReference type="FunFam" id="1.10.40.90:FF:000001">
    <property type="entry name" value="DNA-directed RNA polymerase subunit beta"/>
    <property type="match status" value="1"/>
</dbReference>
<dbReference type="FunFam" id="4.10.860.120:FF:000001">
    <property type="entry name" value="DNA-directed RNA polymerase subunit beta"/>
    <property type="match status" value="1"/>
</dbReference>
<dbReference type="Gene3D" id="1.10.132.30">
    <property type="match status" value="1"/>
</dbReference>
<dbReference type="Gene3D" id="1.10.150.390">
    <property type="match status" value="1"/>
</dbReference>
<dbReference type="Gene3D" id="1.10.1790.20">
    <property type="match status" value="1"/>
</dbReference>
<dbReference type="Gene3D" id="1.10.40.90">
    <property type="match status" value="1"/>
</dbReference>
<dbReference type="Gene3D" id="2.40.40.20">
    <property type="match status" value="1"/>
</dbReference>
<dbReference type="Gene3D" id="2.40.50.100">
    <property type="match status" value="1"/>
</dbReference>
<dbReference type="Gene3D" id="4.10.860.120">
    <property type="entry name" value="RNA polymerase II, clamp domain"/>
    <property type="match status" value="1"/>
</dbReference>
<dbReference type="Gene3D" id="1.10.274.100">
    <property type="entry name" value="RNA polymerase Rpb1, domain 3"/>
    <property type="match status" value="1"/>
</dbReference>
<dbReference type="HAMAP" id="MF_01322">
    <property type="entry name" value="RNApol_bact_RpoC"/>
    <property type="match status" value="1"/>
</dbReference>
<dbReference type="InterPro" id="IPR045867">
    <property type="entry name" value="DNA-dir_RpoC_beta_prime"/>
</dbReference>
<dbReference type="InterPro" id="IPR012754">
    <property type="entry name" value="DNA-dir_RpoC_beta_prime_bact"/>
</dbReference>
<dbReference type="InterPro" id="IPR000722">
    <property type="entry name" value="RNA_pol_asu"/>
</dbReference>
<dbReference type="InterPro" id="IPR006592">
    <property type="entry name" value="RNA_pol_N"/>
</dbReference>
<dbReference type="InterPro" id="IPR007080">
    <property type="entry name" value="RNA_pol_Rpb1_1"/>
</dbReference>
<dbReference type="InterPro" id="IPR007066">
    <property type="entry name" value="RNA_pol_Rpb1_3"/>
</dbReference>
<dbReference type="InterPro" id="IPR042102">
    <property type="entry name" value="RNA_pol_Rpb1_3_sf"/>
</dbReference>
<dbReference type="InterPro" id="IPR007083">
    <property type="entry name" value="RNA_pol_Rpb1_4"/>
</dbReference>
<dbReference type="InterPro" id="IPR007081">
    <property type="entry name" value="RNA_pol_Rpb1_5"/>
</dbReference>
<dbReference type="InterPro" id="IPR044893">
    <property type="entry name" value="RNA_pol_Rpb1_clamp_domain"/>
</dbReference>
<dbReference type="InterPro" id="IPR038120">
    <property type="entry name" value="Rpb1_funnel_sf"/>
</dbReference>
<dbReference type="NCBIfam" id="TIGR02386">
    <property type="entry name" value="rpoC_TIGR"/>
    <property type="match status" value="1"/>
</dbReference>
<dbReference type="PANTHER" id="PTHR19376">
    <property type="entry name" value="DNA-DIRECTED RNA POLYMERASE"/>
    <property type="match status" value="1"/>
</dbReference>
<dbReference type="PANTHER" id="PTHR19376:SF54">
    <property type="entry name" value="DNA-DIRECTED RNA POLYMERASE SUBUNIT BETA"/>
    <property type="match status" value="1"/>
</dbReference>
<dbReference type="Pfam" id="PF04997">
    <property type="entry name" value="RNA_pol_Rpb1_1"/>
    <property type="match status" value="1"/>
</dbReference>
<dbReference type="Pfam" id="PF00623">
    <property type="entry name" value="RNA_pol_Rpb1_2"/>
    <property type="match status" value="1"/>
</dbReference>
<dbReference type="Pfam" id="PF04983">
    <property type="entry name" value="RNA_pol_Rpb1_3"/>
    <property type="match status" value="1"/>
</dbReference>
<dbReference type="Pfam" id="PF05000">
    <property type="entry name" value="RNA_pol_Rpb1_4"/>
    <property type="match status" value="1"/>
</dbReference>
<dbReference type="Pfam" id="PF04998">
    <property type="entry name" value="RNA_pol_Rpb1_5"/>
    <property type="match status" value="1"/>
</dbReference>
<dbReference type="SMART" id="SM00663">
    <property type="entry name" value="RPOLA_N"/>
    <property type="match status" value="1"/>
</dbReference>
<dbReference type="SUPFAM" id="SSF64484">
    <property type="entry name" value="beta and beta-prime subunits of DNA dependent RNA-polymerase"/>
    <property type="match status" value="1"/>
</dbReference>
<proteinExistence type="inferred from homology"/>
<keyword id="KW-0240">DNA-directed RNA polymerase</keyword>
<keyword id="KW-0460">Magnesium</keyword>
<keyword id="KW-0479">Metal-binding</keyword>
<keyword id="KW-0548">Nucleotidyltransferase</keyword>
<keyword id="KW-0804">Transcription</keyword>
<keyword id="KW-0808">Transferase</keyword>
<keyword id="KW-0862">Zinc</keyword>
<reference key="1">
    <citation type="journal article" date="2004" name="Nucleic Acids Res.">
        <title>Whole genome comparisons of serotype 4b and 1/2a strains of the food-borne pathogen Listeria monocytogenes reveal new insights into the core genome components of this species.</title>
        <authorList>
            <person name="Nelson K.E."/>
            <person name="Fouts D.E."/>
            <person name="Mongodin E.F."/>
            <person name="Ravel J."/>
            <person name="DeBoy R.T."/>
            <person name="Kolonay J.F."/>
            <person name="Rasko D.A."/>
            <person name="Angiuoli S.V."/>
            <person name="Gill S.R."/>
            <person name="Paulsen I.T."/>
            <person name="Peterson J.D."/>
            <person name="White O."/>
            <person name="Nelson W.C."/>
            <person name="Nierman W.C."/>
            <person name="Beanan M.J."/>
            <person name="Brinkac L.M."/>
            <person name="Daugherty S.C."/>
            <person name="Dodson R.J."/>
            <person name="Durkin A.S."/>
            <person name="Madupu R."/>
            <person name="Haft D.H."/>
            <person name="Selengut J."/>
            <person name="Van Aken S.E."/>
            <person name="Khouri H.M."/>
            <person name="Fedorova N."/>
            <person name="Forberger H.A."/>
            <person name="Tran B."/>
            <person name="Kathariou S."/>
            <person name="Wonderling L.D."/>
            <person name="Uhlich G.A."/>
            <person name="Bayles D.O."/>
            <person name="Luchansky J.B."/>
            <person name="Fraser C.M."/>
        </authorList>
    </citation>
    <scope>NUCLEOTIDE SEQUENCE [LARGE SCALE GENOMIC DNA]</scope>
    <source>
        <strain>F2365</strain>
    </source>
</reference>
<evidence type="ECO:0000255" key="1">
    <source>
        <dbReference type="HAMAP-Rule" id="MF_01322"/>
    </source>
</evidence>